<organism>
    <name type="scientific">Desulfatibacillum aliphaticivorans</name>
    <dbReference type="NCBI Taxonomy" id="218208"/>
    <lineage>
        <taxon>Bacteria</taxon>
        <taxon>Pseudomonadati</taxon>
        <taxon>Thermodesulfobacteriota</taxon>
        <taxon>Desulfobacteria</taxon>
        <taxon>Desulfobacterales</taxon>
        <taxon>Desulfatibacillaceae</taxon>
        <taxon>Desulfatibacillum</taxon>
    </lineage>
</organism>
<feature type="chain" id="PRO_1000125930" description="Small ribosomal subunit protein uS7">
    <location>
        <begin position="1"/>
        <end position="156"/>
    </location>
</feature>
<dbReference type="EMBL" id="CP001322">
    <property type="protein sequence ID" value="ACL03615.1"/>
    <property type="molecule type" value="Genomic_DNA"/>
</dbReference>
<dbReference type="RefSeq" id="WP_012611046.1">
    <property type="nucleotide sequence ID" value="NC_011768.1"/>
</dbReference>
<dbReference type="SMR" id="B8FET8"/>
<dbReference type="KEGG" id="dal:Dalk_1918"/>
<dbReference type="eggNOG" id="COG0049">
    <property type="taxonomic scope" value="Bacteria"/>
</dbReference>
<dbReference type="HOGENOM" id="CLU_072226_1_1_7"/>
<dbReference type="Proteomes" id="UP000000739">
    <property type="component" value="Chromosome"/>
</dbReference>
<dbReference type="GO" id="GO:0015935">
    <property type="term" value="C:small ribosomal subunit"/>
    <property type="evidence" value="ECO:0007669"/>
    <property type="project" value="InterPro"/>
</dbReference>
<dbReference type="GO" id="GO:0019843">
    <property type="term" value="F:rRNA binding"/>
    <property type="evidence" value="ECO:0007669"/>
    <property type="project" value="UniProtKB-UniRule"/>
</dbReference>
<dbReference type="GO" id="GO:0003735">
    <property type="term" value="F:structural constituent of ribosome"/>
    <property type="evidence" value="ECO:0007669"/>
    <property type="project" value="InterPro"/>
</dbReference>
<dbReference type="GO" id="GO:0000049">
    <property type="term" value="F:tRNA binding"/>
    <property type="evidence" value="ECO:0007669"/>
    <property type="project" value="UniProtKB-UniRule"/>
</dbReference>
<dbReference type="GO" id="GO:0006412">
    <property type="term" value="P:translation"/>
    <property type="evidence" value="ECO:0007669"/>
    <property type="project" value="UniProtKB-UniRule"/>
</dbReference>
<dbReference type="CDD" id="cd14869">
    <property type="entry name" value="uS7_Bacteria"/>
    <property type="match status" value="1"/>
</dbReference>
<dbReference type="FunFam" id="1.10.455.10:FF:000001">
    <property type="entry name" value="30S ribosomal protein S7"/>
    <property type="match status" value="1"/>
</dbReference>
<dbReference type="Gene3D" id="1.10.455.10">
    <property type="entry name" value="Ribosomal protein S7 domain"/>
    <property type="match status" value="1"/>
</dbReference>
<dbReference type="HAMAP" id="MF_00480_B">
    <property type="entry name" value="Ribosomal_uS7_B"/>
    <property type="match status" value="1"/>
</dbReference>
<dbReference type="InterPro" id="IPR000235">
    <property type="entry name" value="Ribosomal_uS7"/>
</dbReference>
<dbReference type="InterPro" id="IPR005717">
    <property type="entry name" value="Ribosomal_uS7_bac/org-type"/>
</dbReference>
<dbReference type="InterPro" id="IPR020606">
    <property type="entry name" value="Ribosomal_uS7_CS"/>
</dbReference>
<dbReference type="InterPro" id="IPR023798">
    <property type="entry name" value="Ribosomal_uS7_dom"/>
</dbReference>
<dbReference type="InterPro" id="IPR036823">
    <property type="entry name" value="Ribosomal_uS7_dom_sf"/>
</dbReference>
<dbReference type="NCBIfam" id="TIGR01029">
    <property type="entry name" value="rpsG_bact"/>
    <property type="match status" value="1"/>
</dbReference>
<dbReference type="PANTHER" id="PTHR11205">
    <property type="entry name" value="RIBOSOMAL PROTEIN S7"/>
    <property type="match status" value="1"/>
</dbReference>
<dbReference type="Pfam" id="PF00177">
    <property type="entry name" value="Ribosomal_S7"/>
    <property type="match status" value="1"/>
</dbReference>
<dbReference type="PIRSF" id="PIRSF002122">
    <property type="entry name" value="RPS7p_RPS7a_RPS5e_RPS7o"/>
    <property type="match status" value="1"/>
</dbReference>
<dbReference type="SUPFAM" id="SSF47973">
    <property type="entry name" value="Ribosomal protein S7"/>
    <property type="match status" value="1"/>
</dbReference>
<dbReference type="PROSITE" id="PS00052">
    <property type="entry name" value="RIBOSOMAL_S7"/>
    <property type="match status" value="1"/>
</dbReference>
<evidence type="ECO:0000255" key="1">
    <source>
        <dbReference type="HAMAP-Rule" id="MF_00480"/>
    </source>
</evidence>
<evidence type="ECO:0000305" key="2"/>
<protein>
    <recommendedName>
        <fullName evidence="1">Small ribosomal subunit protein uS7</fullName>
    </recommendedName>
    <alternativeName>
        <fullName evidence="2">30S ribosomal protein S7</fullName>
    </alternativeName>
</protein>
<gene>
    <name evidence="1" type="primary">rpsG</name>
    <name type="ordered locus">Dalk_1918</name>
</gene>
<accession>B8FET8</accession>
<sequence length="156" mass="18123">MPRRREVPKREVLPDSRYNSELVAKFVNVIMRDGKKSVAEGILYDAFDIMEERTKEAPLEIFEKAINNIKPVIEVKSRRVGGSTYQIPMEVRANRRTALAMKWIMTYSRSRSEKKMSAKLAGELLDAYNNRGASIKKKEDTHRMAEANKAFAHYRW</sequence>
<keyword id="KW-1185">Reference proteome</keyword>
<keyword id="KW-0687">Ribonucleoprotein</keyword>
<keyword id="KW-0689">Ribosomal protein</keyword>
<keyword id="KW-0694">RNA-binding</keyword>
<keyword id="KW-0699">rRNA-binding</keyword>
<keyword id="KW-0820">tRNA-binding</keyword>
<reference key="1">
    <citation type="journal article" date="2012" name="Environ. Microbiol.">
        <title>The genome sequence of Desulfatibacillum alkenivorans AK-01: a blueprint for anaerobic alkane oxidation.</title>
        <authorList>
            <person name="Callaghan A.V."/>
            <person name="Morris B.E."/>
            <person name="Pereira I.A."/>
            <person name="McInerney M.J."/>
            <person name="Austin R.N."/>
            <person name="Groves J.T."/>
            <person name="Kukor J.J."/>
            <person name="Suflita J.M."/>
            <person name="Young L.Y."/>
            <person name="Zylstra G.J."/>
            <person name="Wawrik B."/>
        </authorList>
    </citation>
    <scope>NUCLEOTIDE SEQUENCE [LARGE SCALE GENOMIC DNA]</scope>
    <source>
        <strain>AK-01</strain>
    </source>
</reference>
<proteinExistence type="inferred from homology"/>
<name>RS7_DESAL</name>
<comment type="function">
    <text evidence="1">One of the primary rRNA binding proteins, it binds directly to 16S rRNA where it nucleates assembly of the head domain of the 30S subunit. Is located at the subunit interface close to the decoding center, probably blocks exit of the E-site tRNA.</text>
</comment>
<comment type="subunit">
    <text evidence="1">Part of the 30S ribosomal subunit. Contacts proteins S9 and S11.</text>
</comment>
<comment type="similarity">
    <text evidence="1">Belongs to the universal ribosomal protein uS7 family.</text>
</comment>